<keyword id="KW-0028">Amino-acid biosynthesis</keyword>
<keyword id="KW-0100">Branched-chain amino acid biosynthesis</keyword>
<keyword id="KW-0963">Cytoplasm</keyword>
<keyword id="KW-0432">Leucine biosynthesis</keyword>
<keyword id="KW-0464">Manganese</keyword>
<keyword id="KW-0479">Metal-binding</keyword>
<keyword id="KW-0808">Transferase</keyword>
<comment type="function">
    <text evidence="1">Catalyzes the condensation of the acetyl group of acetyl-CoA with 3-methyl-2-oxobutanoate (2-ketoisovalerate) to form 3-carboxy-3-hydroxy-4-methylpentanoate (2-isopropylmalate).</text>
</comment>
<comment type="catalytic activity">
    <reaction evidence="1">
        <text>3-methyl-2-oxobutanoate + acetyl-CoA + H2O = (2S)-2-isopropylmalate + CoA + H(+)</text>
        <dbReference type="Rhea" id="RHEA:21524"/>
        <dbReference type="ChEBI" id="CHEBI:1178"/>
        <dbReference type="ChEBI" id="CHEBI:11851"/>
        <dbReference type="ChEBI" id="CHEBI:15377"/>
        <dbReference type="ChEBI" id="CHEBI:15378"/>
        <dbReference type="ChEBI" id="CHEBI:57287"/>
        <dbReference type="ChEBI" id="CHEBI:57288"/>
        <dbReference type="EC" id="2.3.3.13"/>
    </reaction>
</comment>
<comment type="cofactor">
    <cofactor evidence="1">
        <name>Mn(2+)</name>
        <dbReference type="ChEBI" id="CHEBI:29035"/>
    </cofactor>
</comment>
<comment type="pathway">
    <text evidence="1">Amino-acid biosynthesis; L-leucine biosynthesis; L-leucine from 3-methyl-2-oxobutanoate: step 1/4.</text>
</comment>
<comment type="subunit">
    <text evidence="1">Homodimer.</text>
</comment>
<comment type="subcellular location">
    <subcellularLocation>
        <location evidence="1">Cytoplasm</location>
    </subcellularLocation>
</comment>
<comment type="similarity">
    <text evidence="1">Belongs to the alpha-IPM synthase/homocitrate synthase family. LeuA type 1 subfamily.</text>
</comment>
<reference key="1">
    <citation type="journal article" date="2008" name="PLoS ONE">
        <title>A recalibrated molecular clock and independent origins for the cholera pandemic clones.</title>
        <authorList>
            <person name="Feng L."/>
            <person name="Reeves P.R."/>
            <person name="Lan R."/>
            <person name="Ren Y."/>
            <person name="Gao C."/>
            <person name="Zhou Z."/>
            <person name="Ren Y."/>
            <person name="Cheng J."/>
            <person name="Wang W."/>
            <person name="Wang J."/>
            <person name="Qian W."/>
            <person name="Li D."/>
            <person name="Wang L."/>
        </authorList>
    </citation>
    <scope>NUCLEOTIDE SEQUENCE [LARGE SCALE GENOMIC DNA]</scope>
    <source>
        <strain>M66-2</strain>
    </source>
</reference>
<accession>C3LR32</accession>
<feature type="chain" id="PRO_1000149328" description="2-isopropylmalate synthase">
    <location>
        <begin position="1"/>
        <end position="516"/>
    </location>
</feature>
<feature type="domain" description="Pyruvate carboxyltransferase" evidence="1">
    <location>
        <begin position="5"/>
        <end position="267"/>
    </location>
</feature>
<feature type="region of interest" description="Regulatory domain" evidence="1">
    <location>
        <begin position="392"/>
        <end position="516"/>
    </location>
</feature>
<feature type="binding site" evidence="1">
    <location>
        <position position="14"/>
    </location>
    <ligand>
        <name>Mn(2+)</name>
        <dbReference type="ChEBI" id="CHEBI:29035"/>
    </ligand>
</feature>
<feature type="binding site" evidence="1">
    <location>
        <position position="202"/>
    </location>
    <ligand>
        <name>Mn(2+)</name>
        <dbReference type="ChEBI" id="CHEBI:29035"/>
    </ligand>
</feature>
<feature type="binding site" evidence="1">
    <location>
        <position position="204"/>
    </location>
    <ligand>
        <name>Mn(2+)</name>
        <dbReference type="ChEBI" id="CHEBI:29035"/>
    </ligand>
</feature>
<feature type="binding site" evidence="1">
    <location>
        <position position="238"/>
    </location>
    <ligand>
        <name>Mn(2+)</name>
        <dbReference type="ChEBI" id="CHEBI:29035"/>
    </ligand>
</feature>
<protein>
    <recommendedName>
        <fullName evidence="1">2-isopropylmalate synthase</fullName>
        <ecNumber evidence="1">2.3.3.13</ecNumber>
    </recommendedName>
    <alternativeName>
        <fullName evidence="1">Alpha-IPM synthase</fullName>
    </alternativeName>
    <alternativeName>
        <fullName evidence="1">Alpha-isopropylmalate synthase</fullName>
    </alternativeName>
</protein>
<evidence type="ECO:0000255" key="1">
    <source>
        <dbReference type="HAMAP-Rule" id="MF_01025"/>
    </source>
</evidence>
<proteinExistence type="inferred from homology"/>
<name>LEU1_VIBCM</name>
<organism>
    <name type="scientific">Vibrio cholerae serotype O1 (strain M66-2)</name>
    <dbReference type="NCBI Taxonomy" id="579112"/>
    <lineage>
        <taxon>Bacteria</taxon>
        <taxon>Pseudomonadati</taxon>
        <taxon>Pseudomonadota</taxon>
        <taxon>Gammaproteobacteria</taxon>
        <taxon>Vibrionales</taxon>
        <taxon>Vibrionaceae</taxon>
        <taxon>Vibrio</taxon>
    </lineage>
</organism>
<gene>
    <name evidence="1" type="primary">leuA</name>
    <name type="ordered locus">VCM66_2412</name>
</gene>
<dbReference type="EC" id="2.3.3.13" evidence="1"/>
<dbReference type="EMBL" id="CP001233">
    <property type="protein sequence ID" value="ACP06710.1"/>
    <property type="molecule type" value="Genomic_DNA"/>
</dbReference>
<dbReference type="RefSeq" id="WP_001064847.1">
    <property type="nucleotide sequence ID" value="NC_012578.1"/>
</dbReference>
<dbReference type="SMR" id="C3LR32"/>
<dbReference type="KEGG" id="vcm:VCM66_2412"/>
<dbReference type="HOGENOM" id="CLU_022158_0_1_6"/>
<dbReference type="UniPathway" id="UPA00048">
    <property type="reaction ID" value="UER00070"/>
</dbReference>
<dbReference type="Proteomes" id="UP000001217">
    <property type="component" value="Chromosome I"/>
</dbReference>
<dbReference type="GO" id="GO:0005829">
    <property type="term" value="C:cytosol"/>
    <property type="evidence" value="ECO:0007669"/>
    <property type="project" value="TreeGrafter"/>
</dbReference>
<dbReference type="GO" id="GO:0003852">
    <property type="term" value="F:2-isopropylmalate synthase activity"/>
    <property type="evidence" value="ECO:0007669"/>
    <property type="project" value="UniProtKB-UniRule"/>
</dbReference>
<dbReference type="GO" id="GO:0003985">
    <property type="term" value="F:acetyl-CoA C-acetyltransferase activity"/>
    <property type="evidence" value="ECO:0007669"/>
    <property type="project" value="UniProtKB-UniRule"/>
</dbReference>
<dbReference type="GO" id="GO:0030145">
    <property type="term" value="F:manganese ion binding"/>
    <property type="evidence" value="ECO:0007669"/>
    <property type="project" value="UniProtKB-UniRule"/>
</dbReference>
<dbReference type="GO" id="GO:0009098">
    <property type="term" value="P:L-leucine biosynthetic process"/>
    <property type="evidence" value="ECO:0007669"/>
    <property type="project" value="UniProtKB-UniRule"/>
</dbReference>
<dbReference type="CDD" id="cd07940">
    <property type="entry name" value="DRE_TIM_IPMS"/>
    <property type="match status" value="1"/>
</dbReference>
<dbReference type="FunFam" id="1.10.238.260:FF:000001">
    <property type="entry name" value="2-isopropylmalate synthase"/>
    <property type="match status" value="1"/>
</dbReference>
<dbReference type="FunFam" id="3.20.20.70:FF:000010">
    <property type="entry name" value="2-isopropylmalate synthase"/>
    <property type="match status" value="1"/>
</dbReference>
<dbReference type="FunFam" id="3.30.160.270:FF:000001">
    <property type="entry name" value="2-isopropylmalate synthase"/>
    <property type="match status" value="1"/>
</dbReference>
<dbReference type="Gene3D" id="1.10.238.260">
    <property type="match status" value="1"/>
</dbReference>
<dbReference type="Gene3D" id="3.30.160.270">
    <property type="match status" value="1"/>
</dbReference>
<dbReference type="Gene3D" id="3.20.20.70">
    <property type="entry name" value="Aldolase class I"/>
    <property type="match status" value="1"/>
</dbReference>
<dbReference type="HAMAP" id="MF_01025">
    <property type="entry name" value="LeuA_type1"/>
    <property type="match status" value="1"/>
</dbReference>
<dbReference type="InterPro" id="IPR050073">
    <property type="entry name" value="2-IPM_HCS-like"/>
</dbReference>
<dbReference type="InterPro" id="IPR013709">
    <property type="entry name" value="2-isopropylmalate_synth_dimer"/>
</dbReference>
<dbReference type="InterPro" id="IPR002034">
    <property type="entry name" value="AIPM/Hcit_synth_CS"/>
</dbReference>
<dbReference type="InterPro" id="IPR013785">
    <property type="entry name" value="Aldolase_TIM"/>
</dbReference>
<dbReference type="InterPro" id="IPR054691">
    <property type="entry name" value="LeuA/HCS_post-cat"/>
</dbReference>
<dbReference type="InterPro" id="IPR036230">
    <property type="entry name" value="LeuA_allosteric_dom_sf"/>
</dbReference>
<dbReference type="InterPro" id="IPR005671">
    <property type="entry name" value="LeuA_bact_synth"/>
</dbReference>
<dbReference type="InterPro" id="IPR000891">
    <property type="entry name" value="PYR_CT"/>
</dbReference>
<dbReference type="NCBIfam" id="TIGR00973">
    <property type="entry name" value="leuA_bact"/>
    <property type="match status" value="1"/>
</dbReference>
<dbReference type="NCBIfam" id="NF002084">
    <property type="entry name" value="PRK00915.1-1"/>
    <property type="match status" value="1"/>
</dbReference>
<dbReference type="NCBIfam" id="NF002086">
    <property type="entry name" value="PRK00915.1-3"/>
    <property type="match status" value="1"/>
</dbReference>
<dbReference type="PANTHER" id="PTHR10277:SF9">
    <property type="entry name" value="2-ISOPROPYLMALATE SYNTHASE 1, CHLOROPLASTIC-RELATED"/>
    <property type="match status" value="1"/>
</dbReference>
<dbReference type="PANTHER" id="PTHR10277">
    <property type="entry name" value="HOMOCITRATE SYNTHASE-RELATED"/>
    <property type="match status" value="1"/>
</dbReference>
<dbReference type="Pfam" id="PF22617">
    <property type="entry name" value="HCS_D2"/>
    <property type="match status" value="1"/>
</dbReference>
<dbReference type="Pfam" id="PF00682">
    <property type="entry name" value="HMGL-like"/>
    <property type="match status" value="1"/>
</dbReference>
<dbReference type="Pfam" id="PF08502">
    <property type="entry name" value="LeuA_dimer"/>
    <property type="match status" value="1"/>
</dbReference>
<dbReference type="SMART" id="SM00917">
    <property type="entry name" value="LeuA_dimer"/>
    <property type="match status" value="1"/>
</dbReference>
<dbReference type="SUPFAM" id="SSF110921">
    <property type="entry name" value="2-isopropylmalate synthase LeuA, allosteric (dimerisation) domain"/>
    <property type="match status" value="1"/>
</dbReference>
<dbReference type="SUPFAM" id="SSF51569">
    <property type="entry name" value="Aldolase"/>
    <property type="match status" value="1"/>
</dbReference>
<dbReference type="PROSITE" id="PS00815">
    <property type="entry name" value="AIPM_HOMOCIT_SYNTH_1"/>
    <property type="match status" value="1"/>
</dbReference>
<dbReference type="PROSITE" id="PS00816">
    <property type="entry name" value="AIPM_HOMOCIT_SYNTH_2"/>
    <property type="match status" value="1"/>
</dbReference>
<dbReference type="PROSITE" id="PS50991">
    <property type="entry name" value="PYR_CT"/>
    <property type="match status" value="1"/>
</dbReference>
<sequence length="516" mass="56164">MNNQVIIFDTTLRDGEQALSASLTVKEKLQIAYALERLGVDIIEAGFPVSSPGDFESVQTIAKNIKNSRVCALSRAVAKDIDAAAEALKVAEAFRIHTFISTSTIHVQDKLRRSYDDVVAMAVKAVKHARQYTDDVEFSCEDAGRTPIDNLCRMVEAAINAGARTINIPDTVGYTVPSEFGGIIQTLFNRVPNIDKAIISVHCHDDLGMSVANSIAAIQAGARQVEGTINGIGERAGNCALEEIAMIIKTRQELLGVTTGIKHDEISRTSKLVSQLCNMPIQSNKAIVGANAFSHSSGIHQDGMLKNKNTYEIMTPESIGLKNQALNLTSRSGRAAVKSHMDSMGYNENEYNLDALYEDFLKLADRKGQVFDYDLEALMHFSNLREEDDFYKLNYLSVQSGSVMATTSIKLLCGGEEKCEAAVGNGPVDALYQCIYRITGYEIVLDKFDLTAKGEGEDGLGQADIIANYKGRKYHGTGVSTDIVEASGQALLHVINSIHRADQIAQIKQKKSVATV</sequence>